<organism>
    <name type="scientific">Oryza sativa subsp. japonica</name>
    <name type="common">Rice</name>
    <dbReference type="NCBI Taxonomy" id="39947"/>
    <lineage>
        <taxon>Eukaryota</taxon>
        <taxon>Viridiplantae</taxon>
        <taxon>Streptophyta</taxon>
        <taxon>Embryophyta</taxon>
        <taxon>Tracheophyta</taxon>
        <taxon>Spermatophyta</taxon>
        <taxon>Magnoliopsida</taxon>
        <taxon>Liliopsida</taxon>
        <taxon>Poales</taxon>
        <taxon>Poaceae</taxon>
        <taxon>BOP clade</taxon>
        <taxon>Oryzoideae</taxon>
        <taxon>Oryzeae</taxon>
        <taxon>Oryzinae</taxon>
        <taxon>Oryza</taxon>
        <taxon>Oryza sativa</taxon>
    </lineage>
</organism>
<proteinExistence type="evidence at protein level"/>
<feature type="chain" id="PRO_0000282497" description="DEAD-box ATP-dependent RNA helicase 56">
    <location>
        <begin position="1"/>
        <end position="432"/>
    </location>
</feature>
<feature type="domain" description="Helicase ATP-binding" evidence="3">
    <location>
        <begin position="82"/>
        <end position="255"/>
    </location>
</feature>
<feature type="domain" description="Helicase C-terminal" evidence="4">
    <location>
        <begin position="283"/>
        <end position="428"/>
    </location>
</feature>
<feature type="coiled-coil region" evidence="2">
    <location>
        <begin position="1"/>
        <end position="28"/>
    </location>
</feature>
<feature type="short sequence motif" description="Q motif">
    <location>
        <begin position="51"/>
        <end position="79"/>
    </location>
</feature>
<feature type="short sequence motif" description="DEAD box">
    <location>
        <begin position="202"/>
        <end position="205"/>
    </location>
</feature>
<feature type="binding site" evidence="3">
    <location>
        <begin position="95"/>
        <end position="102"/>
    </location>
    <ligand>
        <name>ATP</name>
        <dbReference type="ChEBI" id="CHEBI:30616"/>
    </ligand>
</feature>
<feature type="splice variant" id="VSP_024169" description="In isoform 2." evidence="8">
    <location>
        <begin position="1"/>
        <end position="88"/>
    </location>
</feature>
<comment type="function">
    <text evidence="1 5">ATP-binding RNA helicase involved in pre-mRNA splicing. Required for the export of mRNA out of the nucleus (By similarity). Required for tapetal programmed cell death (PCD) and degeneration during anther development. Forms dimer with AIP2 and binds the promoter region of the cysteine protease CP1. Can complement the yeast RNA helicase SUB2. Plants silencing AIP1 and AIP2 are male sterile (PubMed:21467577).</text>
</comment>
<comment type="catalytic activity">
    <reaction>
        <text>ATP + H2O = ADP + phosphate + H(+)</text>
        <dbReference type="Rhea" id="RHEA:13065"/>
        <dbReference type="ChEBI" id="CHEBI:15377"/>
        <dbReference type="ChEBI" id="CHEBI:15378"/>
        <dbReference type="ChEBI" id="CHEBI:30616"/>
        <dbReference type="ChEBI" id="CHEBI:43474"/>
        <dbReference type="ChEBI" id="CHEBI:456216"/>
        <dbReference type="EC" id="3.6.4.13"/>
    </reaction>
</comment>
<comment type="subunit">
    <text evidence="5">Homodimer and heterodimer with AIP2 (PubMed:21467577). Interacts with API5 (PubMed:21467577).</text>
</comment>
<comment type="subcellular location">
    <subcellularLocation>
        <location evidence="5">Nucleus</location>
    </subcellularLocation>
</comment>
<comment type="alternative products">
    <event type="alternative splicing"/>
    <isoform>
        <id>Q0JM17-1</id>
        <name>1</name>
        <sequence type="displayed"/>
    </isoform>
    <isoform>
        <id>Q0JM17-2</id>
        <name>2</name>
        <sequence type="described" ref="VSP_024169"/>
    </isoform>
</comment>
<comment type="domain">
    <text>The Q motif is unique to and characteristic of the DEAD box family of RNA helicases and controls ATP binding and hydrolysis.</text>
</comment>
<comment type="similarity">
    <text evidence="8">Belongs to the DEAD box helicase family. DECD subfamily.</text>
</comment>
<comment type="sequence caution" evidence="8">
    <conflict type="erroneous initiation">
        <sequence resource="EMBL-CDS" id="BAF05211"/>
    </conflict>
    <text>Extended N-terminus.</text>
</comment>
<accession>Q0JM17</accession>
<accession>B7EDH0</accession>
<accession>Q5JKF1</accession>
<dbReference type="EC" id="3.6.4.13"/>
<dbReference type="EMBL" id="GQ478227">
    <property type="protein sequence ID" value="ACV83946.1"/>
    <property type="molecule type" value="mRNA"/>
</dbReference>
<dbReference type="EMBL" id="AP004225">
    <property type="protein sequence ID" value="BAD88053.1"/>
    <property type="molecule type" value="Genomic_DNA"/>
</dbReference>
<dbReference type="EMBL" id="AP008207">
    <property type="protein sequence ID" value="BAF05211.1"/>
    <property type="status" value="ALT_INIT"/>
    <property type="molecule type" value="Genomic_DNA"/>
</dbReference>
<dbReference type="EMBL" id="AP014957">
    <property type="protein sequence ID" value="BAS72632.1"/>
    <property type="molecule type" value="Genomic_DNA"/>
</dbReference>
<dbReference type="EMBL" id="AK067431">
    <property type="protein sequence ID" value="BAG90417.1"/>
    <property type="molecule type" value="mRNA"/>
</dbReference>
<dbReference type="RefSeq" id="NP_001388560.1">
    <molecule id="Q0JM17-1"/>
    <property type="nucleotide sequence ID" value="NM_001401631.1"/>
</dbReference>
<dbReference type="RefSeq" id="XP_015621977.1">
    <property type="nucleotide sequence ID" value="XM_015766491.1"/>
</dbReference>
<dbReference type="RefSeq" id="XP_015621978.1">
    <molecule id="Q0JM17-2"/>
    <property type="nucleotide sequence ID" value="XM_015766492.2"/>
</dbReference>
<dbReference type="SMR" id="Q0JM17"/>
<dbReference type="BioGRID" id="795229">
    <property type="interactions" value="1"/>
</dbReference>
<dbReference type="FunCoup" id="Q0JM17">
    <property type="interactions" value="3129"/>
</dbReference>
<dbReference type="STRING" id="39947.Q0JM17"/>
<dbReference type="PaxDb" id="39947-Q0JM17"/>
<dbReference type="EnsemblPlants" id="Os01t0549700-01">
    <molecule id="Q0JM17-1"/>
    <property type="protein sequence ID" value="Os01t0549700-01"/>
    <property type="gene ID" value="Os01g0549700"/>
</dbReference>
<dbReference type="GeneID" id="4326192"/>
<dbReference type="Gramene" id="Os01t0549700-01">
    <molecule id="Q0JM17-1"/>
    <property type="protein sequence ID" value="Os01t0549700-01"/>
    <property type="gene ID" value="Os01g0549700"/>
</dbReference>
<dbReference type="KEGG" id="dosa:Os01g0549700"/>
<dbReference type="eggNOG" id="KOG0329">
    <property type="taxonomic scope" value="Eukaryota"/>
</dbReference>
<dbReference type="HOGENOM" id="CLU_003041_1_0_1"/>
<dbReference type="InParanoid" id="Q0JM17"/>
<dbReference type="OMA" id="YAHVEPK"/>
<dbReference type="OrthoDB" id="10265785at2759"/>
<dbReference type="Proteomes" id="UP000000763">
    <property type="component" value="Chromosome 1"/>
</dbReference>
<dbReference type="Proteomes" id="UP000059680">
    <property type="component" value="Chromosome 1"/>
</dbReference>
<dbReference type="ExpressionAtlas" id="Q0JM17">
    <property type="expression patterns" value="baseline and differential"/>
</dbReference>
<dbReference type="GO" id="GO:0005634">
    <property type="term" value="C:nucleus"/>
    <property type="evidence" value="ECO:0000314"/>
    <property type="project" value="UniProtKB"/>
</dbReference>
<dbReference type="GO" id="GO:0005524">
    <property type="term" value="F:ATP binding"/>
    <property type="evidence" value="ECO:0007669"/>
    <property type="project" value="UniProtKB-KW"/>
</dbReference>
<dbReference type="GO" id="GO:0016887">
    <property type="term" value="F:ATP hydrolysis activity"/>
    <property type="evidence" value="ECO:0007669"/>
    <property type="project" value="RHEA"/>
</dbReference>
<dbReference type="GO" id="GO:0003729">
    <property type="term" value="F:mRNA binding"/>
    <property type="evidence" value="ECO:0000318"/>
    <property type="project" value="GO_Central"/>
</dbReference>
<dbReference type="GO" id="GO:0003724">
    <property type="term" value="F:RNA helicase activity"/>
    <property type="evidence" value="ECO:0000318"/>
    <property type="project" value="GO_Central"/>
</dbReference>
<dbReference type="GO" id="GO:0048653">
    <property type="term" value="P:anther development"/>
    <property type="evidence" value="ECO:0000315"/>
    <property type="project" value="UniProtKB"/>
</dbReference>
<dbReference type="GO" id="GO:0006397">
    <property type="term" value="P:mRNA processing"/>
    <property type="evidence" value="ECO:0007669"/>
    <property type="project" value="UniProtKB-KW"/>
</dbReference>
<dbReference type="GO" id="GO:0051028">
    <property type="term" value="P:mRNA transport"/>
    <property type="evidence" value="ECO:0007669"/>
    <property type="project" value="UniProtKB-KW"/>
</dbReference>
<dbReference type="GO" id="GO:0009555">
    <property type="term" value="P:pollen development"/>
    <property type="evidence" value="ECO:0000315"/>
    <property type="project" value="UniProtKB"/>
</dbReference>
<dbReference type="GO" id="GO:0008380">
    <property type="term" value="P:RNA splicing"/>
    <property type="evidence" value="ECO:0007669"/>
    <property type="project" value="UniProtKB-KW"/>
</dbReference>
<dbReference type="CDD" id="cd17950">
    <property type="entry name" value="DEADc_DDX39"/>
    <property type="match status" value="1"/>
</dbReference>
<dbReference type="CDD" id="cd18787">
    <property type="entry name" value="SF2_C_DEAD"/>
    <property type="match status" value="1"/>
</dbReference>
<dbReference type="FunFam" id="3.40.50.300:FF:000111">
    <property type="entry name" value="DEAD-box ATP-dependent RNA helicase"/>
    <property type="match status" value="1"/>
</dbReference>
<dbReference type="FunFam" id="3.40.50.300:FF:000168">
    <property type="entry name" value="DEAD-box ATP-dependent RNA helicase 56-like"/>
    <property type="match status" value="1"/>
</dbReference>
<dbReference type="Gene3D" id="3.40.50.300">
    <property type="entry name" value="P-loop containing nucleotide triphosphate hydrolases"/>
    <property type="match status" value="2"/>
</dbReference>
<dbReference type="InterPro" id="IPR011545">
    <property type="entry name" value="DEAD/DEAH_box_helicase_dom"/>
</dbReference>
<dbReference type="InterPro" id="IPR014001">
    <property type="entry name" value="Helicase_ATP-bd"/>
</dbReference>
<dbReference type="InterPro" id="IPR001650">
    <property type="entry name" value="Helicase_C-like"/>
</dbReference>
<dbReference type="InterPro" id="IPR027417">
    <property type="entry name" value="P-loop_NTPase"/>
</dbReference>
<dbReference type="InterPro" id="IPR014014">
    <property type="entry name" value="RNA_helicase_DEAD_Q_motif"/>
</dbReference>
<dbReference type="PANTHER" id="PTHR47958">
    <property type="entry name" value="ATP-DEPENDENT RNA HELICASE DBP3"/>
    <property type="match status" value="1"/>
</dbReference>
<dbReference type="Pfam" id="PF00270">
    <property type="entry name" value="DEAD"/>
    <property type="match status" value="1"/>
</dbReference>
<dbReference type="Pfam" id="PF00271">
    <property type="entry name" value="Helicase_C"/>
    <property type="match status" value="1"/>
</dbReference>
<dbReference type="SMART" id="SM00487">
    <property type="entry name" value="DEXDc"/>
    <property type="match status" value="1"/>
</dbReference>
<dbReference type="SMART" id="SM00490">
    <property type="entry name" value="HELICc"/>
    <property type="match status" value="1"/>
</dbReference>
<dbReference type="SUPFAM" id="SSF52540">
    <property type="entry name" value="P-loop containing nucleoside triphosphate hydrolases"/>
    <property type="match status" value="1"/>
</dbReference>
<dbReference type="PROSITE" id="PS51192">
    <property type="entry name" value="HELICASE_ATP_BIND_1"/>
    <property type="match status" value="1"/>
</dbReference>
<dbReference type="PROSITE" id="PS51194">
    <property type="entry name" value="HELICASE_CTER"/>
    <property type="match status" value="1"/>
</dbReference>
<dbReference type="PROSITE" id="PS51195">
    <property type="entry name" value="Q_MOTIF"/>
    <property type="match status" value="1"/>
</dbReference>
<name>RH56_ORYSJ</name>
<keyword id="KW-0025">Alternative splicing</keyword>
<keyword id="KW-0067">ATP-binding</keyword>
<keyword id="KW-0175">Coiled coil</keyword>
<keyword id="KW-0347">Helicase</keyword>
<keyword id="KW-0378">Hydrolase</keyword>
<keyword id="KW-0507">mRNA processing</keyword>
<keyword id="KW-0508">mRNA splicing</keyword>
<keyword id="KW-0509">mRNA transport</keyword>
<keyword id="KW-0547">Nucleotide-binding</keyword>
<keyword id="KW-0539">Nucleus</keyword>
<keyword id="KW-1185">Reference proteome</keyword>
<keyword id="KW-0694">RNA-binding</keyword>
<keyword id="KW-0813">Transport</keyword>
<gene>
    <name evidence="6" type="primary">AIP1</name>
    <name evidence="7" type="synonym">BAT1</name>
    <name type="ordered locus">Os01g0549700</name>
    <name type="ordered locus">LOC_Os01g36890</name>
    <name type="ORF">B1156H12.15-1</name>
</gene>
<sequence>MAEAEVKDNEVYEEDLVDYEEEVENGTDGGANAANASADVVKKGYVGIHSSGFRDFLLKPELLRAIQDCGFEHPSEVQHECIPQAILGMDVICQAKSGMGKTAVFVLSSLQQIDPVAGQVGALVLCHTRELAYQICHEFERFSKYLPEVKVAVFYGGVHIKKHKDLLKNDCPHIVVGTPGRILALAREKDLSLKNVRHFILDECDKMLDSLDMRRDVQEIFKMTPHDKQVMMFSATLSKEIRPVCKKFMQDPMEIYVDDEAKLTLHGLVQHYIKLSEAEKNRKLNDLLDALDFNQVVIFVKSVSRAAELNKLLCECNFPAISIHSGMTQEERLTRYKNFKEGHKRILVATDLVGRGIDIERVNIVINYDMPDSADSYLHRVGRAGRFGTKGLAITFVSSASDSDVLNQVQERFEVDIKELPEQIDTSTYMPS</sequence>
<evidence type="ECO:0000250" key="1">
    <source>
        <dbReference type="UniProtKB" id="Q07478"/>
    </source>
</evidence>
<evidence type="ECO:0000255" key="2"/>
<evidence type="ECO:0000255" key="3">
    <source>
        <dbReference type="PROSITE-ProRule" id="PRU00541"/>
    </source>
</evidence>
<evidence type="ECO:0000255" key="4">
    <source>
        <dbReference type="PROSITE-ProRule" id="PRU00542"/>
    </source>
</evidence>
<evidence type="ECO:0000269" key="5">
    <source>
    </source>
</evidence>
<evidence type="ECO:0000303" key="6">
    <source>
    </source>
</evidence>
<evidence type="ECO:0000303" key="7">
    <source ref="1"/>
</evidence>
<evidence type="ECO:0000305" key="8"/>
<protein>
    <recommendedName>
        <fullName>DEAD-box ATP-dependent RNA helicase 56</fullName>
        <ecNumber>3.6.4.13</ecNumber>
    </recommendedName>
    <alternativeName>
        <fullName evidence="6">API5-interacting protein 1</fullName>
    </alternativeName>
</protein>
<reference key="1">
    <citation type="submission" date="2009-08" db="EMBL/GenBank/DDBJ databases">
        <title>Oryza sativa japonica group DExD box helicase protein HLA-B associated transcript 1 (BAT1) mRNA.</title>
        <authorList>
            <person name="Umate P."/>
            <person name="Tuteja N."/>
        </authorList>
    </citation>
    <scope>NUCLEOTIDE SEQUENCE [MRNA] (ISOFORM 1)</scope>
    <source>
        <strain>cv. Nipponbare</strain>
    </source>
</reference>
<reference key="2">
    <citation type="journal article" date="2002" name="Nature">
        <title>The genome sequence and structure of rice chromosome 1.</title>
        <authorList>
            <person name="Sasaki T."/>
            <person name="Matsumoto T."/>
            <person name="Yamamoto K."/>
            <person name="Sakata K."/>
            <person name="Baba T."/>
            <person name="Katayose Y."/>
            <person name="Wu J."/>
            <person name="Niimura Y."/>
            <person name="Cheng Z."/>
            <person name="Nagamura Y."/>
            <person name="Antonio B.A."/>
            <person name="Kanamori H."/>
            <person name="Hosokawa S."/>
            <person name="Masukawa M."/>
            <person name="Arikawa K."/>
            <person name="Chiden Y."/>
            <person name="Hayashi M."/>
            <person name="Okamoto M."/>
            <person name="Ando T."/>
            <person name="Aoki H."/>
            <person name="Arita K."/>
            <person name="Hamada M."/>
            <person name="Harada C."/>
            <person name="Hijishita S."/>
            <person name="Honda M."/>
            <person name="Ichikawa Y."/>
            <person name="Idonuma A."/>
            <person name="Iijima M."/>
            <person name="Ikeda M."/>
            <person name="Ikeno M."/>
            <person name="Ito S."/>
            <person name="Ito T."/>
            <person name="Ito Y."/>
            <person name="Ito Y."/>
            <person name="Iwabuchi A."/>
            <person name="Kamiya K."/>
            <person name="Karasawa W."/>
            <person name="Katagiri S."/>
            <person name="Kikuta A."/>
            <person name="Kobayashi N."/>
            <person name="Kono I."/>
            <person name="Machita K."/>
            <person name="Maehara T."/>
            <person name="Mizuno H."/>
            <person name="Mizubayashi T."/>
            <person name="Mukai Y."/>
            <person name="Nagasaki H."/>
            <person name="Nakashima M."/>
            <person name="Nakama Y."/>
            <person name="Nakamichi Y."/>
            <person name="Nakamura M."/>
            <person name="Namiki N."/>
            <person name="Negishi M."/>
            <person name="Ohta I."/>
            <person name="Ono N."/>
            <person name="Saji S."/>
            <person name="Sakai K."/>
            <person name="Shibata M."/>
            <person name="Shimokawa T."/>
            <person name="Shomura A."/>
            <person name="Song J."/>
            <person name="Takazaki Y."/>
            <person name="Terasawa K."/>
            <person name="Tsuji K."/>
            <person name="Waki K."/>
            <person name="Yamagata H."/>
            <person name="Yamane H."/>
            <person name="Yoshiki S."/>
            <person name="Yoshihara R."/>
            <person name="Yukawa K."/>
            <person name="Zhong H."/>
            <person name="Iwama H."/>
            <person name="Endo T."/>
            <person name="Ito H."/>
            <person name="Hahn J.H."/>
            <person name="Kim H.-I."/>
            <person name="Eun M.-Y."/>
            <person name="Yano M."/>
            <person name="Jiang J."/>
            <person name="Gojobori T."/>
        </authorList>
    </citation>
    <scope>NUCLEOTIDE SEQUENCE [LARGE SCALE GENOMIC DNA]</scope>
    <source>
        <strain>cv. Nipponbare</strain>
    </source>
</reference>
<reference key="3">
    <citation type="journal article" date="2005" name="Nature">
        <title>The map-based sequence of the rice genome.</title>
        <authorList>
            <consortium name="International rice genome sequencing project (IRGSP)"/>
        </authorList>
    </citation>
    <scope>NUCLEOTIDE SEQUENCE [LARGE SCALE GENOMIC DNA]</scope>
    <source>
        <strain>cv. Nipponbare</strain>
    </source>
</reference>
<reference key="4">
    <citation type="journal article" date="2008" name="Nucleic Acids Res.">
        <title>The rice annotation project database (RAP-DB): 2008 update.</title>
        <authorList>
            <consortium name="The rice annotation project (RAP)"/>
        </authorList>
    </citation>
    <scope>GENOME REANNOTATION</scope>
    <source>
        <strain>cv. Nipponbare</strain>
    </source>
</reference>
<reference key="5">
    <citation type="journal article" date="2013" name="Rice">
        <title>Improvement of the Oryza sativa Nipponbare reference genome using next generation sequence and optical map data.</title>
        <authorList>
            <person name="Kawahara Y."/>
            <person name="de la Bastide M."/>
            <person name="Hamilton J.P."/>
            <person name="Kanamori H."/>
            <person name="McCombie W.R."/>
            <person name="Ouyang S."/>
            <person name="Schwartz D.C."/>
            <person name="Tanaka T."/>
            <person name="Wu J."/>
            <person name="Zhou S."/>
            <person name="Childs K.L."/>
            <person name="Davidson R.M."/>
            <person name="Lin H."/>
            <person name="Quesada-Ocampo L."/>
            <person name="Vaillancourt B."/>
            <person name="Sakai H."/>
            <person name="Lee S.S."/>
            <person name="Kim J."/>
            <person name="Numa H."/>
            <person name="Itoh T."/>
            <person name="Buell C.R."/>
            <person name="Matsumoto T."/>
        </authorList>
    </citation>
    <scope>GENOME REANNOTATION</scope>
    <source>
        <strain>cv. Nipponbare</strain>
    </source>
</reference>
<reference key="6">
    <citation type="journal article" date="2003" name="Science">
        <title>Collection, mapping, and annotation of over 28,000 cDNA clones from japonica rice.</title>
        <authorList>
            <consortium name="The rice full-length cDNA consortium"/>
        </authorList>
    </citation>
    <scope>NUCLEOTIDE SEQUENCE [LARGE SCALE MRNA] (ISOFORM 1)</scope>
    <source>
        <strain>cv. Nipponbare</strain>
    </source>
</reference>
<reference key="7">
    <citation type="journal article" date="2011" name="Plant Cell">
        <title>Rice APOPTOSIS INHIBITOR5 coupled with two DEAD-box adenosine 5'-triphosphate-dependent RNA helicases regulates tapetum degeneration.</title>
        <authorList>
            <person name="Li X."/>
            <person name="Gao X."/>
            <person name="Wei Y."/>
            <person name="Deng L."/>
            <person name="Ouyang Y."/>
            <person name="Chen G."/>
            <person name="Li X."/>
            <person name="Zhang Q."/>
            <person name="Wu C."/>
        </authorList>
    </citation>
    <scope>FUNCTION</scope>
    <scope>SUBUNIT</scope>
    <scope>INTERACTION WITH API5</scope>
    <scope>SUBCELLULAR LOCATION</scope>
</reference>